<keyword id="KW-0008">Acetylcholine receptor inhibiting toxin</keyword>
<keyword id="KW-1015">Disulfide bond</keyword>
<keyword id="KW-0872">Ion channel impairing toxin</keyword>
<keyword id="KW-0528">Neurotoxin</keyword>
<keyword id="KW-0629">Postsynaptic neurotoxin</keyword>
<keyword id="KW-0964">Secreted</keyword>
<keyword id="KW-0800">Toxin</keyword>
<sequence length="13" mass="1397">ITCCTRGTCAQHC</sequence>
<protein>
    <recommendedName>
        <fullName>Alpha-conotoxin-like Br1.4</fullName>
    </recommendedName>
</protein>
<evidence type="ECO:0000250" key="1"/>
<evidence type="ECO:0000250" key="2">
    <source>
        <dbReference type="UniProtKB" id="P0C1D0"/>
    </source>
</evidence>
<evidence type="ECO:0000305" key="3"/>
<organism>
    <name type="scientific">Conus brunneus</name>
    <name type="common">Wood's brown cone</name>
    <dbReference type="NCBI Taxonomy" id="101289"/>
    <lineage>
        <taxon>Eukaryota</taxon>
        <taxon>Metazoa</taxon>
        <taxon>Spiralia</taxon>
        <taxon>Lophotrochozoa</taxon>
        <taxon>Mollusca</taxon>
        <taxon>Gastropoda</taxon>
        <taxon>Caenogastropoda</taxon>
        <taxon>Neogastropoda</taxon>
        <taxon>Conoidea</taxon>
        <taxon>Conidae</taxon>
        <taxon>Conus</taxon>
        <taxon>Stephanoconus</taxon>
    </lineage>
</organism>
<dbReference type="ConoServer" id="3713">
    <property type="toxin name" value="Br1.4"/>
</dbReference>
<dbReference type="GO" id="GO:0005576">
    <property type="term" value="C:extracellular region"/>
    <property type="evidence" value="ECO:0007669"/>
    <property type="project" value="UniProtKB-SubCell"/>
</dbReference>
<dbReference type="GO" id="GO:0035792">
    <property type="term" value="C:host cell postsynaptic membrane"/>
    <property type="evidence" value="ECO:0007669"/>
    <property type="project" value="UniProtKB-KW"/>
</dbReference>
<dbReference type="GO" id="GO:0030550">
    <property type="term" value="F:acetylcholine receptor inhibitor activity"/>
    <property type="evidence" value="ECO:0007669"/>
    <property type="project" value="UniProtKB-KW"/>
</dbReference>
<dbReference type="GO" id="GO:0099106">
    <property type="term" value="F:ion channel regulator activity"/>
    <property type="evidence" value="ECO:0007669"/>
    <property type="project" value="UniProtKB-KW"/>
</dbReference>
<dbReference type="GO" id="GO:0090729">
    <property type="term" value="F:toxin activity"/>
    <property type="evidence" value="ECO:0007669"/>
    <property type="project" value="UniProtKB-KW"/>
</dbReference>
<accession>P0C8U3</accession>
<feature type="peptide" id="PRO_0000366053" description="Alpha-conotoxin-like Br1.4">
    <location>
        <begin position="1"/>
        <end position="13"/>
    </location>
</feature>
<feature type="disulfide bond" evidence="2">
    <location>
        <begin position="3"/>
        <end position="9"/>
    </location>
</feature>
<feature type="disulfide bond" evidence="2">
    <location>
        <begin position="4"/>
        <end position="13"/>
    </location>
</feature>
<reference key="1">
    <citation type="journal article" date="2006" name="J. Biol. Chem.">
        <title>Conus peptides: biodiversity-based discovery and exogenomics.</title>
        <authorList>
            <person name="Olivera B.M."/>
        </authorList>
    </citation>
    <scope>NUCLEOTIDE SEQUENCE [MRNA]</scope>
    <scope>REVIEW</scope>
    <source>
        <tissue>Venom duct</tissue>
    </source>
</reference>
<proteinExistence type="evidence at transcript level"/>
<comment type="function">
    <text evidence="1">Alpha-conotoxins act on postsynaptic membranes, they bind to the nicotinic acetylcholine receptors (nAChR) and thus inhibit them.</text>
</comment>
<comment type="subcellular location">
    <subcellularLocation>
        <location evidence="1">Secreted</location>
    </subcellularLocation>
</comment>
<comment type="tissue specificity">
    <text>Expressed by the venom duct.</text>
</comment>
<comment type="domain">
    <text>The cysteine framework is I (CC-C-C). Alpha4/3 pattern.</text>
</comment>
<comment type="similarity">
    <text evidence="3">Belongs to the conotoxin A superfamily.</text>
</comment>
<name>CA14_CONBR</name>